<gene>
    <name evidence="1" type="primary">dtd</name>
    <name type="ordered locus">Rcas_2223</name>
</gene>
<dbReference type="EC" id="3.1.1.96" evidence="1"/>
<dbReference type="EMBL" id="CP000804">
    <property type="protein sequence ID" value="ABU58306.1"/>
    <property type="molecule type" value="Genomic_DNA"/>
</dbReference>
<dbReference type="RefSeq" id="WP_012120730.1">
    <property type="nucleotide sequence ID" value="NC_009767.1"/>
</dbReference>
<dbReference type="SMR" id="A7NLC3"/>
<dbReference type="STRING" id="383372.Rcas_2223"/>
<dbReference type="KEGG" id="rca:Rcas_2223"/>
<dbReference type="eggNOG" id="COG1490">
    <property type="taxonomic scope" value="Bacteria"/>
</dbReference>
<dbReference type="HOGENOM" id="CLU_076901_1_0_0"/>
<dbReference type="OrthoDB" id="9801395at2"/>
<dbReference type="Proteomes" id="UP000000263">
    <property type="component" value="Chromosome"/>
</dbReference>
<dbReference type="GO" id="GO:0005737">
    <property type="term" value="C:cytoplasm"/>
    <property type="evidence" value="ECO:0007669"/>
    <property type="project" value="UniProtKB-SubCell"/>
</dbReference>
<dbReference type="GO" id="GO:0051500">
    <property type="term" value="F:D-tyrosyl-tRNA(Tyr) deacylase activity"/>
    <property type="evidence" value="ECO:0007669"/>
    <property type="project" value="TreeGrafter"/>
</dbReference>
<dbReference type="GO" id="GO:0106026">
    <property type="term" value="F:Gly-tRNA(Ala) deacylase activity"/>
    <property type="evidence" value="ECO:0007669"/>
    <property type="project" value="UniProtKB-UniRule"/>
</dbReference>
<dbReference type="GO" id="GO:0043908">
    <property type="term" value="F:Ser(Gly)-tRNA(Ala) hydrolase activity"/>
    <property type="evidence" value="ECO:0007669"/>
    <property type="project" value="UniProtKB-UniRule"/>
</dbReference>
<dbReference type="GO" id="GO:0000049">
    <property type="term" value="F:tRNA binding"/>
    <property type="evidence" value="ECO:0007669"/>
    <property type="project" value="UniProtKB-UniRule"/>
</dbReference>
<dbReference type="GO" id="GO:0019478">
    <property type="term" value="P:D-amino acid catabolic process"/>
    <property type="evidence" value="ECO:0007669"/>
    <property type="project" value="UniProtKB-UniRule"/>
</dbReference>
<dbReference type="CDD" id="cd00563">
    <property type="entry name" value="Dtyr_deacylase"/>
    <property type="match status" value="1"/>
</dbReference>
<dbReference type="FunFam" id="3.50.80.10:FF:000001">
    <property type="entry name" value="D-aminoacyl-tRNA deacylase"/>
    <property type="match status" value="1"/>
</dbReference>
<dbReference type="Gene3D" id="3.50.80.10">
    <property type="entry name" value="D-tyrosyl-tRNA(Tyr) deacylase"/>
    <property type="match status" value="1"/>
</dbReference>
<dbReference type="HAMAP" id="MF_00518">
    <property type="entry name" value="Deacylase_Dtd"/>
    <property type="match status" value="1"/>
</dbReference>
<dbReference type="InterPro" id="IPR003732">
    <property type="entry name" value="Daa-tRNA_deacyls_DTD"/>
</dbReference>
<dbReference type="InterPro" id="IPR023509">
    <property type="entry name" value="DTD-like_sf"/>
</dbReference>
<dbReference type="NCBIfam" id="TIGR00256">
    <property type="entry name" value="D-aminoacyl-tRNA deacylase"/>
    <property type="match status" value="1"/>
</dbReference>
<dbReference type="PANTHER" id="PTHR10472:SF5">
    <property type="entry name" value="D-AMINOACYL-TRNA DEACYLASE 1"/>
    <property type="match status" value="1"/>
</dbReference>
<dbReference type="PANTHER" id="PTHR10472">
    <property type="entry name" value="D-TYROSYL-TRNA TYR DEACYLASE"/>
    <property type="match status" value="1"/>
</dbReference>
<dbReference type="Pfam" id="PF02580">
    <property type="entry name" value="Tyr_Deacylase"/>
    <property type="match status" value="1"/>
</dbReference>
<dbReference type="SUPFAM" id="SSF69500">
    <property type="entry name" value="DTD-like"/>
    <property type="match status" value="1"/>
</dbReference>
<comment type="function">
    <text evidence="1">An aminoacyl-tRNA editing enzyme that deacylates mischarged D-aminoacyl-tRNAs. Also deacylates mischarged glycyl-tRNA(Ala), protecting cells against glycine mischarging by AlaRS. Acts via tRNA-based rather than protein-based catalysis; rejects L-amino acids rather than detecting D-amino acids in the active site. By recycling D-aminoacyl-tRNA to D-amino acids and free tRNA molecules, this enzyme counteracts the toxicity associated with the formation of D-aminoacyl-tRNA entities in vivo and helps enforce protein L-homochirality.</text>
</comment>
<comment type="catalytic activity">
    <reaction evidence="1">
        <text>glycyl-tRNA(Ala) + H2O = tRNA(Ala) + glycine + H(+)</text>
        <dbReference type="Rhea" id="RHEA:53744"/>
        <dbReference type="Rhea" id="RHEA-COMP:9657"/>
        <dbReference type="Rhea" id="RHEA-COMP:13640"/>
        <dbReference type="ChEBI" id="CHEBI:15377"/>
        <dbReference type="ChEBI" id="CHEBI:15378"/>
        <dbReference type="ChEBI" id="CHEBI:57305"/>
        <dbReference type="ChEBI" id="CHEBI:78442"/>
        <dbReference type="ChEBI" id="CHEBI:78522"/>
        <dbReference type="EC" id="3.1.1.96"/>
    </reaction>
</comment>
<comment type="catalytic activity">
    <reaction evidence="1">
        <text>a D-aminoacyl-tRNA + H2O = a tRNA + a D-alpha-amino acid + H(+)</text>
        <dbReference type="Rhea" id="RHEA:13953"/>
        <dbReference type="Rhea" id="RHEA-COMP:10123"/>
        <dbReference type="Rhea" id="RHEA-COMP:10124"/>
        <dbReference type="ChEBI" id="CHEBI:15377"/>
        <dbReference type="ChEBI" id="CHEBI:15378"/>
        <dbReference type="ChEBI" id="CHEBI:59871"/>
        <dbReference type="ChEBI" id="CHEBI:78442"/>
        <dbReference type="ChEBI" id="CHEBI:79333"/>
        <dbReference type="EC" id="3.1.1.96"/>
    </reaction>
</comment>
<comment type="subunit">
    <text evidence="1">Homodimer.</text>
</comment>
<comment type="subcellular location">
    <subcellularLocation>
        <location evidence="1">Cytoplasm</location>
    </subcellularLocation>
</comment>
<comment type="domain">
    <text evidence="1">A Gly-cisPro motif from one monomer fits into the active site of the other monomer to allow specific chiral rejection of L-amino acids.</text>
</comment>
<comment type="similarity">
    <text evidence="1">Belongs to the DTD family.</text>
</comment>
<protein>
    <recommendedName>
        <fullName evidence="1">D-aminoacyl-tRNA deacylase</fullName>
        <shortName evidence="1">DTD</shortName>
        <ecNumber evidence="1">3.1.1.96</ecNumber>
    </recommendedName>
    <alternativeName>
        <fullName evidence="1">Gly-tRNA(Ala) deacylase</fullName>
    </alternativeName>
</protein>
<reference key="1">
    <citation type="submission" date="2007-08" db="EMBL/GenBank/DDBJ databases">
        <title>Complete sequence of Roseiflexus castenholzii DSM 13941.</title>
        <authorList>
            <consortium name="US DOE Joint Genome Institute"/>
            <person name="Copeland A."/>
            <person name="Lucas S."/>
            <person name="Lapidus A."/>
            <person name="Barry K."/>
            <person name="Glavina del Rio T."/>
            <person name="Dalin E."/>
            <person name="Tice H."/>
            <person name="Pitluck S."/>
            <person name="Thompson L.S."/>
            <person name="Brettin T."/>
            <person name="Bruce D."/>
            <person name="Detter J.C."/>
            <person name="Han C."/>
            <person name="Tapia R."/>
            <person name="Schmutz J."/>
            <person name="Larimer F."/>
            <person name="Land M."/>
            <person name="Hauser L."/>
            <person name="Kyrpides N."/>
            <person name="Mikhailova N."/>
            <person name="Bryant D.A."/>
            <person name="Hanada S."/>
            <person name="Tsukatani Y."/>
            <person name="Richardson P."/>
        </authorList>
    </citation>
    <scope>NUCLEOTIDE SEQUENCE [LARGE SCALE GENOMIC DNA]</scope>
    <source>
        <strain>DSM 13941 / HLO8</strain>
    </source>
</reference>
<name>DTD_ROSCS</name>
<feature type="chain" id="PRO_1000081662" description="D-aminoacyl-tRNA deacylase">
    <location>
        <begin position="1"/>
        <end position="157"/>
    </location>
</feature>
<feature type="short sequence motif" description="Gly-cisPro motif, important for rejection of L-amino acids" evidence="1">
    <location>
        <begin position="137"/>
        <end position="138"/>
    </location>
</feature>
<organism>
    <name type="scientific">Roseiflexus castenholzii (strain DSM 13941 / HLO8)</name>
    <dbReference type="NCBI Taxonomy" id="383372"/>
    <lineage>
        <taxon>Bacteria</taxon>
        <taxon>Bacillati</taxon>
        <taxon>Chloroflexota</taxon>
        <taxon>Chloroflexia</taxon>
        <taxon>Chloroflexales</taxon>
        <taxon>Roseiflexineae</taxon>
        <taxon>Roseiflexaceae</taxon>
        <taxon>Roseiflexus</taxon>
    </lineage>
</organism>
<keyword id="KW-0963">Cytoplasm</keyword>
<keyword id="KW-0378">Hydrolase</keyword>
<keyword id="KW-1185">Reference proteome</keyword>
<keyword id="KW-0694">RNA-binding</keyword>
<keyword id="KW-0820">tRNA-binding</keyword>
<accession>A7NLC3</accession>
<proteinExistence type="inferred from homology"/>
<evidence type="ECO:0000255" key="1">
    <source>
        <dbReference type="HAMAP-Rule" id="MF_00518"/>
    </source>
</evidence>
<sequence length="157" mass="16798">MRAVIQRVSEASVTVDGRVIGAIGRGLLILLGVGVGDTEAEAKLLAEKSANLRIFADDEGRFNRSLLDIGGEALVVSQFTLYADTRRGRRPSFSDAAPPEIAAPLVEAFANELQRLGIAVGAGQFGAMMQVALVNDGPVTILLDSAIFREPRNRHER</sequence>